<keyword id="KW-0030">Aminoacyl-tRNA synthetase</keyword>
<keyword id="KW-0067">ATP-binding</keyword>
<keyword id="KW-0963">Cytoplasm</keyword>
<keyword id="KW-0436">Ligase</keyword>
<keyword id="KW-0460">Magnesium</keyword>
<keyword id="KW-0479">Metal-binding</keyword>
<keyword id="KW-0547">Nucleotide-binding</keyword>
<keyword id="KW-0648">Protein biosynthesis</keyword>
<keyword id="KW-0694">RNA-binding</keyword>
<keyword id="KW-0820">tRNA-binding</keyword>
<comment type="catalytic activity">
    <reaction evidence="1">
        <text>tRNA(Phe) + L-phenylalanine + ATP = L-phenylalanyl-tRNA(Phe) + AMP + diphosphate + H(+)</text>
        <dbReference type="Rhea" id="RHEA:19413"/>
        <dbReference type="Rhea" id="RHEA-COMP:9668"/>
        <dbReference type="Rhea" id="RHEA-COMP:9699"/>
        <dbReference type="ChEBI" id="CHEBI:15378"/>
        <dbReference type="ChEBI" id="CHEBI:30616"/>
        <dbReference type="ChEBI" id="CHEBI:33019"/>
        <dbReference type="ChEBI" id="CHEBI:58095"/>
        <dbReference type="ChEBI" id="CHEBI:78442"/>
        <dbReference type="ChEBI" id="CHEBI:78531"/>
        <dbReference type="ChEBI" id="CHEBI:456215"/>
        <dbReference type="EC" id="6.1.1.20"/>
    </reaction>
</comment>
<comment type="cofactor">
    <cofactor evidence="1">
        <name>Mg(2+)</name>
        <dbReference type="ChEBI" id="CHEBI:18420"/>
    </cofactor>
    <text evidence="1">Binds 2 magnesium ions per tetramer.</text>
</comment>
<comment type="subunit">
    <text evidence="1">Tetramer of two alpha and two beta subunits.</text>
</comment>
<comment type="subcellular location">
    <subcellularLocation>
        <location>Cytoplasm</location>
    </subcellularLocation>
</comment>
<comment type="similarity">
    <text evidence="1">Belongs to the phenylalanyl-tRNA synthetase beta subunit family. Type 1 subfamily.</text>
</comment>
<organism>
    <name type="scientific">Staphylococcus aureus (strain MSSA476)</name>
    <dbReference type="NCBI Taxonomy" id="282459"/>
    <lineage>
        <taxon>Bacteria</taxon>
        <taxon>Bacillati</taxon>
        <taxon>Bacillota</taxon>
        <taxon>Bacilli</taxon>
        <taxon>Bacillales</taxon>
        <taxon>Staphylococcaceae</taxon>
        <taxon>Staphylococcus</taxon>
    </lineage>
</organism>
<gene>
    <name evidence="1" type="primary">pheT</name>
    <name type="ordered locus">SAS1073</name>
</gene>
<sequence length="800" mass="88927">MLISNEWLKEYVTIDDSVSNLAERITRTGIEVDDLIDYTKDIKNLVVGFVKSKDKHPDADKLNVCQVDIGEDEPVQIVCGAPNVDAGQYVIVAKVGGRLPGGIKIKRAKLRGERSEGMICSLQEIGISSNYIPKSFESGIYVFSESQVPGTDALQALYLDDQVMEFDLTPNRADALSMIGTAYEVAALYNTKMTKPDTTSNELELSANDELTVTIENEDKVPYYSARVVHDVTIEPSPIWMQARLIKAGIRPINNVVDISNYVLLEYGQPLHMFDQDAIGSQQIVVRQANEGEKMTTLDDTERELLTSDIVITNGQTPIALAGVMGGDFSEVKEQTSNIVIEGAIFDPVSIRHTSRRLNLRSESSSRFEKGIATEFVDEAVDRACYLLQTYANGKVLKDRVSSGELGAFITPIDITADKINRTIGFDLSQNDIVTIFNQLGFDTEINDDVITVLVPSRRKDITIKEDLIEEVARIYGYDDIPSTLPVFDKVTSGQLTDRQYKTRMVKEVLEGAGLDQAITYSLVSKEDATAFSMQQRQTIDLLMPMSEAHASLRQSLLPHLIEAASYNVARKNKDVKLFEIGNVFFANGEGELPDQVEYLSGILTGDYVVNQWQGKKETVDFYLAKGVVDRVSEKLNLEFSYRRADIDGLHPGRTAEILLENKVVGFIGELHPTLAADNDLKRTYVFELNFDALMSVSVGYINYQPIPRFPGMSRDIALEVDQNIPAADLLSTIHAHGGNILKDTLVFDVYQGEHLEKGKKSIAIRLNYLDTEETLTDERVSKVQAEIEAALIEQGAVIR</sequence>
<feature type="chain" id="PRO_0000126952" description="Phenylalanine--tRNA ligase beta subunit">
    <location>
        <begin position="1"/>
        <end position="800"/>
    </location>
</feature>
<feature type="domain" description="tRNA-binding" evidence="1">
    <location>
        <begin position="39"/>
        <end position="154"/>
    </location>
</feature>
<feature type="domain" description="B5" evidence="1">
    <location>
        <begin position="408"/>
        <end position="483"/>
    </location>
</feature>
<feature type="domain" description="FDX-ACB" evidence="1">
    <location>
        <begin position="708"/>
        <end position="800"/>
    </location>
</feature>
<feature type="binding site" evidence="1">
    <location>
        <position position="461"/>
    </location>
    <ligand>
        <name>Mg(2+)</name>
        <dbReference type="ChEBI" id="CHEBI:18420"/>
        <note>shared with alpha subunit</note>
    </ligand>
</feature>
<feature type="binding site" evidence="1">
    <location>
        <position position="467"/>
    </location>
    <ligand>
        <name>Mg(2+)</name>
        <dbReference type="ChEBI" id="CHEBI:18420"/>
        <note>shared with alpha subunit</note>
    </ligand>
</feature>
<feature type="binding site" evidence="1">
    <location>
        <position position="470"/>
    </location>
    <ligand>
        <name>Mg(2+)</name>
        <dbReference type="ChEBI" id="CHEBI:18420"/>
        <note>shared with alpha subunit</note>
    </ligand>
</feature>
<feature type="binding site" evidence="1">
    <location>
        <position position="471"/>
    </location>
    <ligand>
        <name>Mg(2+)</name>
        <dbReference type="ChEBI" id="CHEBI:18420"/>
        <note>shared with alpha subunit</note>
    </ligand>
</feature>
<reference key="1">
    <citation type="journal article" date="2004" name="Proc. Natl. Acad. Sci. U.S.A.">
        <title>Complete genomes of two clinical Staphylococcus aureus strains: evidence for the rapid evolution of virulence and drug resistance.</title>
        <authorList>
            <person name="Holden M.T.G."/>
            <person name="Feil E.J."/>
            <person name="Lindsay J.A."/>
            <person name="Peacock S.J."/>
            <person name="Day N.P.J."/>
            <person name="Enright M.C."/>
            <person name="Foster T.J."/>
            <person name="Moore C.E."/>
            <person name="Hurst L."/>
            <person name="Atkin R."/>
            <person name="Barron A."/>
            <person name="Bason N."/>
            <person name="Bentley S.D."/>
            <person name="Chillingworth C."/>
            <person name="Chillingworth T."/>
            <person name="Churcher C."/>
            <person name="Clark L."/>
            <person name="Corton C."/>
            <person name="Cronin A."/>
            <person name="Doggett J."/>
            <person name="Dowd L."/>
            <person name="Feltwell T."/>
            <person name="Hance Z."/>
            <person name="Harris B."/>
            <person name="Hauser H."/>
            <person name="Holroyd S."/>
            <person name="Jagels K."/>
            <person name="James K.D."/>
            <person name="Lennard N."/>
            <person name="Line A."/>
            <person name="Mayes R."/>
            <person name="Moule S."/>
            <person name="Mungall K."/>
            <person name="Ormond D."/>
            <person name="Quail M.A."/>
            <person name="Rabbinowitsch E."/>
            <person name="Rutherford K.M."/>
            <person name="Sanders M."/>
            <person name="Sharp S."/>
            <person name="Simmonds M."/>
            <person name="Stevens K."/>
            <person name="Whitehead S."/>
            <person name="Barrell B.G."/>
            <person name="Spratt B.G."/>
            <person name="Parkhill J."/>
        </authorList>
    </citation>
    <scope>NUCLEOTIDE SEQUENCE [LARGE SCALE GENOMIC DNA]</scope>
    <source>
        <strain>MSSA476</strain>
    </source>
</reference>
<name>SYFB_STAAS</name>
<evidence type="ECO:0000255" key="1">
    <source>
        <dbReference type="HAMAP-Rule" id="MF_00283"/>
    </source>
</evidence>
<protein>
    <recommendedName>
        <fullName evidence="1">Phenylalanine--tRNA ligase beta subunit</fullName>
        <ecNumber evidence="1">6.1.1.20</ecNumber>
    </recommendedName>
    <alternativeName>
        <fullName evidence="1">Phenylalanyl-tRNA synthetase beta subunit</fullName>
        <shortName evidence="1">PheRS</shortName>
    </alternativeName>
</protein>
<accession>Q6GA75</accession>
<dbReference type="EC" id="6.1.1.20" evidence="1"/>
<dbReference type="EMBL" id="BX571857">
    <property type="protein sequence ID" value="CAG42848.1"/>
    <property type="molecule type" value="Genomic_DNA"/>
</dbReference>
<dbReference type="RefSeq" id="WP_000908972.1">
    <property type="nucleotide sequence ID" value="NC_002953.3"/>
</dbReference>
<dbReference type="SMR" id="Q6GA75"/>
<dbReference type="KEGG" id="sas:SAS1073"/>
<dbReference type="HOGENOM" id="CLU_016891_0_0_9"/>
<dbReference type="GO" id="GO:0009328">
    <property type="term" value="C:phenylalanine-tRNA ligase complex"/>
    <property type="evidence" value="ECO:0007669"/>
    <property type="project" value="TreeGrafter"/>
</dbReference>
<dbReference type="GO" id="GO:0005524">
    <property type="term" value="F:ATP binding"/>
    <property type="evidence" value="ECO:0007669"/>
    <property type="project" value="UniProtKB-UniRule"/>
</dbReference>
<dbReference type="GO" id="GO:0140096">
    <property type="term" value="F:catalytic activity, acting on a protein"/>
    <property type="evidence" value="ECO:0007669"/>
    <property type="project" value="UniProtKB-ARBA"/>
</dbReference>
<dbReference type="GO" id="GO:0000287">
    <property type="term" value="F:magnesium ion binding"/>
    <property type="evidence" value="ECO:0007669"/>
    <property type="project" value="UniProtKB-UniRule"/>
</dbReference>
<dbReference type="GO" id="GO:0004826">
    <property type="term" value="F:phenylalanine-tRNA ligase activity"/>
    <property type="evidence" value="ECO:0007669"/>
    <property type="project" value="UniProtKB-UniRule"/>
</dbReference>
<dbReference type="GO" id="GO:0016740">
    <property type="term" value="F:transferase activity"/>
    <property type="evidence" value="ECO:0007669"/>
    <property type="project" value="UniProtKB-ARBA"/>
</dbReference>
<dbReference type="GO" id="GO:0000049">
    <property type="term" value="F:tRNA binding"/>
    <property type="evidence" value="ECO:0007669"/>
    <property type="project" value="UniProtKB-KW"/>
</dbReference>
<dbReference type="GO" id="GO:0006432">
    <property type="term" value="P:phenylalanyl-tRNA aminoacylation"/>
    <property type="evidence" value="ECO:0007669"/>
    <property type="project" value="UniProtKB-UniRule"/>
</dbReference>
<dbReference type="CDD" id="cd00769">
    <property type="entry name" value="PheRS_beta_core"/>
    <property type="match status" value="1"/>
</dbReference>
<dbReference type="CDD" id="cd02796">
    <property type="entry name" value="tRNA_bind_bactPheRS"/>
    <property type="match status" value="1"/>
</dbReference>
<dbReference type="FunFam" id="2.40.50.140:FF:000045">
    <property type="entry name" value="Phenylalanine--tRNA ligase beta subunit"/>
    <property type="match status" value="1"/>
</dbReference>
<dbReference type="FunFam" id="3.30.56.10:FF:000002">
    <property type="entry name" value="Phenylalanine--tRNA ligase beta subunit"/>
    <property type="match status" value="1"/>
</dbReference>
<dbReference type="FunFam" id="3.30.70.380:FF:000001">
    <property type="entry name" value="Phenylalanine--tRNA ligase beta subunit"/>
    <property type="match status" value="1"/>
</dbReference>
<dbReference type="FunFam" id="3.30.930.10:FF:000022">
    <property type="entry name" value="Phenylalanine--tRNA ligase beta subunit"/>
    <property type="match status" value="1"/>
</dbReference>
<dbReference type="FunFam" id="3.50.40.10:FF:000001">
    <property type="entry name" value="Phenylalanine--tRNA ligase beta subunit"/>
    <property type="match status" value="1"/>
</dbReference>
<dbReference type="Gene3D" id="3.30.56.10">
    <property type="match status" value="2"/>
</dbReference>
<dbReference type="Gene3D" id="3.30.930.10">
    <property type="entry name" value="Bira Bifunctional Protein, Domain 2"/>
    <property type="match status" value="1"/>
</dbReference>
<dbReference type="Gene3D" id="3.30.70.380">
    <property type="entry name" value="Ferrodoxin-fold anticodon-binding domain"/>
    <property type="match status" value="1"/>
</dbReference>
<dbReference type="Gene3D" id="2.40.50.140">
    <property type="entry name" value="Nucleic acid-binding proteins"/>
    <property type="match status" value="1"/>
</dbReference>
<dbReference type="Gene3D" id="3.50.40.10">
    <property type="entry name" value="Phenylalanyl-trna Synthetase, Chain B, domain 3"/>
    <property type="match status" value="1"/>
</dbReference>
<dbReference type="HAMAP" id="MF_00283">
    <property type="entry name" value="Phe_tRNA_synth_beta1"/>
    <property type="match status" value="1"/>
</dbReference>
<dbReference type="InterPro" id="IPR045864">
    <property type="entry name" value="aa-tRNA-synth_II/BPL/LPL"/>
</dbReference>
<dbReference type="InterPro" id="IPR005146">
    <property type="entry name" value="B3/B4_tRNA-bd"/>
</dbReference>
<dbReference type="InterPro" id="IPR009061">
    <property type="entry name" value="DNA-bd_dom_put_sf"/>
</dbReference>
<dbReference type="InterPro" id="IPR005121">
    <property type="entry name" value="Fdx_antiC-bd"/>
</dbReference>
<dbReference type="InterPro" id="IPR036690">
    <property type="entry name" value="Fdx_antiC-bd_sf"/>
</dbReference>
<dbReference type="InterPro" id="IPR012340">
    <property type="entry name" value="NA-bd_OB-fold"/>
</dbReference>
<dbReference type="InterPro" id="IPR045060">
    <property type="entry name" value="Phe-tRNA-ligase_IIc_bsu"/>
</dbReference>
<dbReference type="InterPro" id="IPR004532">
    <property type="entry name" value="Phe-tRNA-ligase_IIc_bsu_bact"/>
</dbReference>
<dbReference type="InterPro" id="IPR020825">
    <property type="entry name" value="Phe-tRNA_synthase-like_B3/B4"/>
</dbReference>
<dbReference type="InterPro" id="IPR041616">
    <property type="entry name" value="PheRS_beta_core"/>
</dbReference>
<dbReference type="InterPro" id="IPR002547">
    <property type="entry name" value="tRNA-bd_dom"/>
</dbReference>
<dbReference type="InterPro" id="IPR033714">
    <property type="entry name" value="tRNA_bind_bactPheRS"/>
</dbReference>
<dbReference type="InterPro" id="IPR005147">
    <property type="entry name" value="tRNA_synthase_B5-dom"/>
</dbReference>
<dbReference type="NCBIfam" id="TIGR00472">
    <property type="entry name" value="pheT_bact"/>
    <property type="match status" value="1"/>
</dbReference>
<dbReference type="NCBIfam" id="NF045760">
    <property type="entry name" value="YtpR"/>
    <property type="match status" value="1"/>
</dbReference>
<dbReference type="PANTHER" id="PTHR10947:SF0">
    <property type="entry name" value="PHENYLALANINE--TRNA LIGASE BETA SUBUNIT"/>
    <property type="match status" value="1"/>
</dbReference>
<dbReference type="PANTHER" id="PTHR10947">
    <property type="entry name" value="PHENYLALANYL-TRNA SYNTHETASE BETA CHAIN AND LEUCINE-RICH REPEAT-CONTAINING PROTEIN 47"/>
    <property type="match status" value="1"/>
</dbReference>
<dbReference type="Pfam" id="PF03483">
    <property type="entry name" value="B3_4"/>
    <property type="match status" value="1"/>
</dbReference>
<dbReference type="Pfam" id="PF03484">
    <property type="entry name" value="B5"/>
    <property type="match status" value="1"/>
</dbReference>
<dbReference type="Pfam" id="PF03147">
    <property type="entry name" value="FDX-ACB"/>
    <property type="match status" value="1"/>
</dbReference>
<dbReference type="Pfam" id="PF01588">
    <property type="entry name" value="tRNA_bind"/>
    <property type="match status" value="1"/>
</dbReference>
<dbReference type="Pfam" id="PF17759">
    <property type="entry name" value="tRNA_synthFbeta"/>
    <property type="match status" value="1"/>
</dbReference>
<dbReference type="SMART" id="SM00873">
    <property type="entry name" value="B3_4"/>
    <property type="match status" value="1"/>
</dbReference>
<dbReference type="SMART" id="SM00874">
    <property type="entry name" value="B5"/>
    <property type="match status" value="1"/>
</dbReference>
<dbReference type="SMART" id="SM00896">
    <property type="entry name" value="FDX-ACB"/>
    <property type="match status" value="1"/>
</dbReference>
<dbReference type="SUPFAM" id="SSF54991">
    <property type="entry name" value="Anticodon-binding domain of PheRS"/>
    <property type="match status" value="1"/>
</dbReference>
<dbReference type="SUPFAM" id="SSF55681">
    <property type="entry name" value="Class II aaRS and biotin synthetases"/>
    <property type="match status" value="1"/>
</dbReference>
<dbReference type="SUPFAM" id="SSF50249">
    <property type="entry name" value="Nucleic acid-binding proteins"/>
    <property type="match status" value="1"/>
</dbReference>
<dbReference type="SUPFAM" id="SSF56037">
    <property type="entry name" value="PheT/TilS domain"/>
    <property type="match status" value="1"/>
</dbReference>
<dbReference type="SUPFAM" id="SSF46955">
    <property type="entry name" value="Putative DNA-binding domain"/>
    <property type="match status" value="1"/>
</dbReference>
<dbReference type="PROSITE" id="PS51483">
    <property type="entry name" value="B5"/>
    <property type="match status" value="1"/>
</dbReference>
<dbReference type="PROSITE" id="PS51447">
    <property type="entry name" value="FDX_ACB"/>
    <property type="match status" value="1"/>
</dbReference>
<dbReference type="PROSITE" id="PS50886">
    <property type="entry name" value="TRBD"/>
    <property type="match status" value="1"/>
</dbReference>
<proteinExistence type="inferred from homology"/>